<evidence type="ECO:0000250" key="1">
    <source>
        <dbReference type="UniProtKB" id="O75884"/>
    </source>
</evidence>
<evidence type="ECO:0000269" key="2">
    <source>
    </source>
</evidence>
<evidence type="ECO:0000303" key="3">
    <source>
    </source>
</evidence>
<evidence type="ECO:0000305" key="4"/>
<evidence type="ECO:0000312" key="5">
    <source>
        <dbReference type="RGD" id="3542"/>
    </source>
</evidence>
<protein>
    <recommendedName>
        <fullName evidence="1">Serine hydrolase RBBP9</fullName>
        <ecNumber evidence="1">3.1.-.-</ecNumber>
    </recommendedName>
    <alternativeName>
        <fullName evidence="3">B5T-overexpressed gene protein</fullName>
        <shortName evidence="3">Protein BOG</shortName>
    </alternativeName>
    <alternativeName>
        <fullName>Retinoblastoma-binding protein 9</fullName>
        <shortName>RBBP-9</shortName>
    </alternativeName>
</protein>
<reference key="1">
    <citation type="journal article" date="1998" name="Nat. Genet.">
        <title>A retinoblastoma-binding protein that affects cell-cycle control and confers transforming ability.</title>
        <authorList>
            <person name="Woitach J.T."/>
            <person name="Zhang M."/>
            <person name="Niu C.-H."/>
            <person name="Thorgeirsson S.S."/>
        </authorList>
    </citation>
    <scope>NUCLEOTIDE SEQUENCE [MRNA]</scope>
    <scope>FUNCTION</scope>
    <scope>INTERACTION WITH RB1; RBL1 AND RBL2</scope>
    <scope>TISSUE SPECIFICITY</scope>
    <scope>MUTAGENESIS OF LEU-63</scope>
    <source>
        <tissue>Liver</tissue>
    </source>
</reference>
<reference key="2">
    <citation type="journal article" date="2004" name="Genome Res.">
        <title>The status, quality, and expansion of the NIH full-length cDNA project: the Mammalian Gene Collection (MGC).</title>
        <authorList>
            <consortium name="The MGC Project Team"/>
        </authorList>
    </citation>
    <scope>NUCLEOTIDE SEQUENCE [LARGE SCALE MRNA]</scope>
    <source>
        <tissue>Prostate</tissue>
    </source>
</reference>
<accession>O88350</accession>
<accession>Q3T1H7</accession>
<feature type="chain" id="PRO_0000097182" description="Serine hydrolase RBBP9">
    <location>
        <begin position="1"/>
        <end position="186"/>
    </location>
</feature>
<feature type="region of interest" description="Involved in binding to RB1" evidence="1">
    <location>
        <begin position="63"/>
        <end position="67"/>
    </location>
</feature>
<feature type="active site" description="Charge relay system" evidence="1">
    <location>
        <position position="75"/>
    </location>
</feature>
<feature type="active site" description="Charge relay system" evidence="1">
    <location>
        <position position="138"/>
    </location>
</feature>
<feature type="active site" description="Charge relay system" evidence="1">
    <location>
        <position position="165"/>
    </location>
</feature>
<feature type="mutagenesis site" description="Loss of binding to RB1 binding." evidence="2">
    <original>L</original>
    <variation>Q</variation>
    <location>
        <position position="63"/>
    </location>
</feature>
<comment type="function">
    <text evidence="1 2">Serine hydrolase. Catalyzes the hydrolytic activation of amino acid ester of the antiviral prodrug valacyclovir to its corresponding active drug, acyclovir (By similarity). May negatively regulate basal or autocrine TGF-beta signaling by suppressing SMAD2-SMAD3 phosphorylation (By similarity). May play a role in the transformation process due to its capacity to confer resistance to the growth-inhibitory effects of TGF-beta through interaction with RB1 and the subsequent displacement of E2F1 (PubMed:9697699).</text>
</comment>
<comment type="catalytic activity">
    <reaction evidence="1">
        <text>valacyclovir + H2O = acyclovir + L-valine + H(+)</text>
        <dbReference type="Rhea" id="RHEA:83871"/>
        <dbReference type="ChEBI" id="CHEBI:2453"/>
        <dbReference type="ChEBI" id="CHEBI:15377"/>
        <dbReference type="ChEBI" id="CHEBI:15378"/>
        <dbReference type="ChEBI" id="CHEBI:57762"/>
        <dbReference type="ChEBI" id="CHEBI:233453"/>
    </reaction>
    <physiologicalReaction direction="left-to-right" evidence="1">
        <dbReference type="Rhea" id="RHEA:83872"/>
    </physiologicalReaction>
</comment>
<comment type="subunit">
    <text evidence="2">Interacts with RB1; the interaction disrupts RB1 binding to E2F1 (PubMed:9697699). Interacts with RBL1 and RBL2 (PubMed:9697699).</text>
</comment>
<comment type="interaction">
    <interactant intactId="EBI-1211014">
        <id>O88350</id>
    </interactant>
    <interactant intactId="EBI-1162932">
        <id>P33568</id>
        <label>Rb1</label>
    </interactant>
    <organismsDiffer>false</organismsDiffer>
    <experiments>4</experiments>
</comment>
<comment type="tissue specificity">
    <text evidence="2">Highly expressed in the spleen, testis and kidney. Also found in the heart, liver, lung and brain.</text>
</comment>
<comment type="similarity">
    <text evidence="4">Belongs to the RBBP9 family.</text>
</comment>
<keyword id="KW-0378">Hydrolase</keyword>
<keyword id="KW-1185">Reference proteome</keyword>
<proteinExistence type="evidence at protein level"/>
<dbReference type="EC" id="3.1.-.-" evidence="1"/>
<dbReference type="EMBL" id="AF025819">
    <property type="protein sequence ID" value="AAC40205.2"/>
    <property type="molecule type" value="mRNA"/>
</dbReference>
<dbReference type="EMBL" id="BC101915">
    <property type="protein sequence ID" value="AAI01916.1"/>
    <property type="molecule type" value="mRNA"/>
</dbReference>
<dbReference type="RefSeq" id="NP_062092.2">
    <property type="nucleotide sequence ID" value="NM_019219.2"/>
</dbReference>
<dbReference type="SMR" id="O88350"/>
<dbReference type="FunCoup" id="O88350">
    <property type="interactions" value="1316"/>
</dbReference>
<dbReference type="IntAct" id="O88350">
    <property type="interactions" value="3"/>
</dbReference>
<dbReference type="STRING" id="10116.ENSRNOP00000010678"/>
<dbReference type="ESTHER" id="ratno-rbbp9">
    <property type="family name" value="Hydrolase_RBBP9_YdeN"/>
</dbReference>
<dbReference type="iPTMnet" id="O88350"/>
<dbReference type="PhosphoSitePlus" id="O88350"/>
<dbReference type="jPOST" id="O88350"/>
<dbReference type="PaxDb" id="10116-ENSRNOP00000010678"/>
<dbReference type="GeneID" id="29459"/>
<dbReference type="KEGG" id="rno:29459"/>
<dbReference type="UCSC" id="RGD:3542">
    <property type="organism name" value="rat"/>
</dbReference>
<dbReference type="AGR" id="RGD:3542"/>
<dbReference type="CTD" id="10741"/>
<dbReference type="RGD" id="3542">
    <property type="gene designation" value="Rbbp9"/>
</dbReference>
<dbReference type="VEuPathDB" id="HostDB:ENSRNOG00000007972"/>
<dbReference type="eggNOG" id="ENOG502QVNM">
    <property type="taxonomic scope" value="Eukaryota"/>
</dbReference>
<dbReference type="HOGENOM" id="CLU_088863_1_0_1"/>
<dbReference type="InParanoid" id="O88350"/>
<dbReference type="OrthoDB" id="2369073at2759"/>
<dbReference type="PhylomeDB" id="O88350"/>
<dbReference type="TreeFam" id="TF106470"/>
<dbReference type="PRO" id="PR:O88350"/>
<dbReference type="Proteomes" id="UP000002494">
    <property type="component" value="Chromosome 3"/>
</dbReference>
<dbReference type="Bgee" id="ENSRNOG00000007972">
    <property type="expression patterns" value="Expressed in ovary and 19 other cell types or tissues"/>
</dbReference>
<dbReference type="GO" id="GO:0017171">
    <property type="term" value="F:serine hydrolase activity"/>
    <property type="evidence" value="ECO:0000250"/>
    <property type="project" value="UniProtKB"/>
</dbReference>
<dbReference type="GO" id="GO:0010628">
    <property type="term" value="P:positive regulation of gene expression"/>
    <property type="evidence" value="ECO:0000266"/>
    <property type="project" value="RGD"/>
</dbReference>
<dbReference type="GO" id="GO:0042127">
    <property type="term" value="P:regulation of cell population proliferation"/>
    <property type="evidence" value="ECO:0000315"/>
    <property type="project" value="RGD"/>
</dbReference>
<dbReference type="GO" id="GO:0009624">
    <property type="term" value="P:response to nematode"/>
    <property type="evidence" value="ECO:0000266"/>
    <property type="project" value="RGD"/>
</dbReference>
<dbReference type="GO" id="GO:0060510">
    <property type="term" value="P:type II pneumocyte differentiation"/>
    <property type="evidence" value="ECO:0000266"/>
    <property type="project" value="RGD"/>
</dbReference>
<dbReference type="FunFam" id="3.40.50.1820:FF:000113">
    <property type="entry name" value="Putative hydrolase RBBP9"/>
    <property type="match status" value="1"/>
</dbReference>
<dbReference type="Gene3D" id="3.40.50.1820">
    <property type="entry name" value="alpha/beta hydrolase"/>
    <property type="match status" value="1"/>
</dbReference>
<dbReference type="InterPro" id="IPR029058">
    <property type="entry name" value="AB_hydrolase_fold"/>
</dbReference>
<dbReference type="InterPro" id="IPR010662">
    <property type="entry name" value="Hydrolase_RBBP9/YdeN"/>
</dbReference>
<dbReference type="InterPro" id="IPR052581">
    <property type="entry name" value="RBBP9"/>
</dbReference>
<dbReference type="PANTHER" id="PTHR15394">
    <property type="entry name" value="SERINE HYDROLASE RBBP9"/>
    <property type="match status" value="1"/>
</dbReference>
<dbReference type="PANTHER" id="PTHR15394:SF3">
    <property type="entry name" value="SERINE HYDROLASE RBBP9"/>
    <property type="match status" value="1"/>
</dbReference>
<dbReference type="Pfam" id="PF06821">
    <property type="entry name" value="Ser_hydrolase"/>
    <property type="match status" value="1"/>
</dbReference>
<dbReference type="SUPFAM" id="SSF53474">
    <property type="entry name" value="alpha/beta-Hydrolases"/>
    <property type="match status" value="1"/>
</dbReference>
<sequence>MASPTKAVIVPGNGGGDVATHGWYGWVRKGLEQIPGFQCLAKNMPDPITARESIWLPFMETELHCDEKTIIIGHSSGAIAAMRYAETHQVYALILVSAYTSDLGDENERASGYFSRPWQWEKIKANCPHIIQFGSTDDPFLPWKEQQEVADRLDAKLYKFTDRGHFQNTEFHELIRVVKSMLTPAL</sequence>
<gene>
    <name evidence="5" type="primary">Rbbp9</name>
    <name evidence="3" type="synonym">Bog</name>
</gene>
<organism>
    <name type="scientific">Rattus norvegicus</name>
    <name type="common">Rat</name>
    <dbReference type="NCBI Taxonomy" id="10116"/>
    <lineage>
        <taxon>Eukaryota</taxon>
        <taxon>Metazoa</taxon>
        <taxon>Chordata</taxon>
        <taxon>Craniata</taxon>
        <taxon>Vertebrata</taxon>
        <taxon>Euteleostomi</taxon>
        <taxon>Mammalia</taxon>
        <taxon>Eutheria</taxon>
        <taxon>Euarchontoglires</taxon>
        <taxon>Glires</taxon>
        <taxon>Rodentia</taxon>
        <taxon>Myomorpha</taxon>
        <taxon>Muroidea</taxon>
        <taxon>Muridae</taxon>
        <taxon>Murinae</taxon>
        <taxon>Rattus</taxon>
    </lineage>
</organism>
<name>RBBP9_RAT</name>